<comment type="catalytic activity">
    <reaction evidence="2">
        <text>5-phospho-beta-D-ribosylamine + glycine + ATP = N(1)-(5-phospho-beta-D-ribosyl)glycinamide + ADP + phosphate + H(+)</text>
        <dbReference type="Rhea" id="RHEA:17453"/>
        <dbReference type="ChEBI" id="CHEBI:15378"/>
        <dbReference type="ChEBI" id="CHEBI:30616"/>
        <dbReference type="ChEBI" id="CHEBI:43474"/>
        <dbReference type="ChEBI" id="CHEBI:57305"/>
        <dbReference type="ChEBI" id="CHEBI:58681"/>
        <dbReference type="ChEBI" id="CHEBI:143788"/>
        <dbReference type="ChEBI" id="CHEBI:456216"/>
        <dbReference type="EC" id="6.3.4.13"/>
    </reaction>
</comment>
<comment type="cofactor">
    <cofactor evidence="1">
        <name>Mg(2+)</name>
        <dbReference type="ChEBI" id="CHEBI:18420"/>
    </cofactor>
    <cofactor evidence="1">
        <name>Mn(2+)</name>
        <dbReference type="ChEBI" id="CHEBI:29035"/>
    </cofactor>
    <text evidence="1">Binds 2 magnesium or manganese ions per subunit.</text>
</comment>
<comment type="pathway">
    <text evidence="2">Purine metabolism; IMP biosynthesis via de novo pathway; N(1)-(5-phospho-D-ribosyl)glycinamide from 5-phospho-alpha-D-ribose 1-diphosphate: step 2/2.</text>
</comment>
<comment type="similarity">
    <text evidence="2">Belongs to the GARS family.</text>
</comment>
<accession>A5UMK4</accession>
<feature type="chain" id="PRO_1000018828" description="Phosphoribosylamine--glycine ligase">
    <location>
        <begin position="1"/>
        <end position="436"/>
    </location>
</feature>
<feature type="domain" description="ATP-grasp" evidence="2">
    <location>
        <begin position="106"/>
        <end position="318"/>
    </location>
</feature>
<feature type="binding site" evidence="2">
    <location>
        <begin position="133"/>
        <end position="196"/>
    </location>
    <ligand>
        <name>ATP</name>
        <dbReference type="ChEBI" id="CHEBI:30616"/>
    </ligand>
</feature>
<feature type="binding site" evidence="2">
    <location>
        <position position="276"/>
    </location>
    <ligand>
        <name>Mg(2+)</name>
        <dbReference type="ChEBI" id="CHEBI:18420"/>
        <label>1</label>
    </ligand>
</feature>
<feature type="binding site" evidence="2">
    <location>
        <position position="276"/>
    </location>
    <ligand>
        <name>Mn(2+)</name>
        <dbReference type="ChEBI" id="CHEBI:29035"/>
        <label>1</label>
    </ligand>
</feature>
<feature type="binding site" evidence="2">
    <location>
        <position position="288"/>
    </location>
    <ligand>
        <name>Mg(2+)</name>
        <dbReference type="ChEBI" id="CHEBI:18420"/>
        <label>1</label>
    </ligand>
</feature>
<feature type="binding site" evidence="2">
    <location>
        <position position="288"/>
    </location>
    <ligand>
        <name>Mg(2+)</name>
        <dbReference type="ChEBI" id="CHEBI:18420"/>
        <label>2</label>
    </ligand>
</feature>
<feature type="binding site" evidence="2">
    <location>
        <position position="288"/>
    </location>
    <ligand>
        <name>Mn(2+)</name>
        <dbReference type="ChEBI" id="CHEBI:29035"/>
        <label>1</label>
    </ligand>
</feature>
<feature type="binding site" evidence="2">
    <location>
        <position position="288"/>
    </location>
    <ligand>
        <name>Mn(2+)</name>
        <dbReference type="ChEBI" id="CHEBI:29035"/>
        <label>2</label>
    </ligand>
</feature>
<feature type="binding site" evidence="2">
    <location>
        <position position="290"/>
    </location>
    <ligand>
        <name>Mg(2+)</name>
        <dbReference type="ChEBI" id="CHEBI:18420"/>
        <label>2</label>
    </ligand>
</feature>
<feature type="binding site" evidence="2">
    <location>
        <position position="290"/>
    </location>
    <ligand>
        <name>Mn(2+)</name>
        <dbReference type="ChEBI" id="CHEBI:29035"/>
        <label>2</label>
    </ligand>
</feature>
<sequence>MKVLVVGTGAREHAIADALKDDVELYCYMSKVNPGISKIAEFAQGDEGEIEKVAKFAVDNNIDIAFIGPEAPLGKGIVDELEKNGISCVGPSQSAARIETDKSFMRKLFEDYDIEGSLVYKVFDNYDDVSAFLDDFDRDVVVKPVGLTGGKGVKIVGDHLKDNQEAKEYSKEVIDNAMGGFTQVIIEERLIGEEFTIQAFCDGTHLAPMPAAQDHPHAFEGDVGAITGGMGSYSDKGGLLPFLSQDDYDEAVKIMEATLKAIAKEAEPYKGILYGQFMLTADGPKLIEYNARFGDPEAMNVLPLLKTPLADVCQAIVDGNLDKVEFNDKASVCKYIVPDGYPETSHAGETIEVDEKTIEDLGAKVFYAAVGLEDDEIHLSGSRALGIVASGDSIEEAEKIAEKACACIKGNVYHRSDVGTTDLVNKRVEHMKEILN</sequence>
<keyword id="KW-0067">ATP-binding</keyword>
<keyword id="KW-0436">Ligase</keyword>
<keyword id="KW-0460">Magnesium</keyword>
<keyword id="KW-0464">Manganese</keyword>
<keyword id="KW-0479">Metal-binding</keyword>
<keyword id="KW-0547">Nucleotide-binding</keyword>
<keyword id="KW-0658">Purine biosynthesis</keyword>
<proteinExistence type="inferred from homology"/>
<evidence type="ECO:0000250" key="1"/>
<evidence type="ECO:0000255" key="2">
    <source>
        <dbReference type="HAMAP-Rule" id="MF_00138"/>
    </source>
</evidence>
<name>PUR2_METS3</name>
<protein>
    <recommendedName>
        <fullName evidence="2">Phosphoribosylamine--glycine ligase</fullName>
        <ecNumber evidence="2">6.3.4.13</ecNumber>
    </recommendedName>
    <alternativeName>
        <fullName evidence="2">GARS</fullName>
    </alternativeName>
    <alternativeName>
        <fullName evidence="2">Glycinamide ribonucleotide synthetase</fullName>
    </alternativeName>
    <alternativeName>
        <fullName evidence="2">Phosphoribosylglycinamide synthetase</fullName>
    </alternativeName>
</protein>
<gene>
    <name evidence="2" type="primary">purD</name>
    <name type="ordered locus">Msm_1227</name>
</gene>
<reference key="1">
    <citation type="journal article" date="2007" name="Proc. Natl. Acad. Sci. U.S.A.">
        <title>Genomic and metabolic adaptations of Methanobrevibacter smithii to the human gut.</title>
        <authorList>
            <person name="Samuel B.S."/>
            <person name="Hansen E.E."/>
            <person name="Manchester J.K."/>
            <person name="Coutinho P.M."/>
            <person name="Henrissat B."/>
            <person name="Fulton R."/>
            <person name="Latreille P."/>
            <person name="Kim K."/>
            <person name="Wilson R.K."/>
            <person name="Gordon J.I."/>
        </authorList>
    </citation>
    <scope>NUCLEOTIDE SEQUENCE [LARGE SCALE GENOMIC DNA]</scope>
    <source>
        <strain>ATCC 35061 / DSM 861 / OCM 144 / PS</strain>
    </source>
</reference>
<organism>
    <name type="scientific">Methanobrevibacter smithii (strain ATCC 35061 / DSM 861 / OCM 144 / PS)</name>
    <dbReference type="NCBI Taxonomy" id="420247"/>
    <lineage>
        <taxon>Archaea</taxon>
        <taxon>Methanobacteriati</taxon>
        <taxon>Methanobacteriota</taxon>
        <taxon>Methanomada group</taxon>
        <taxon>Methanobacteria</taxon>
        <taxon>Methanobacteriales</taxon>
        <taxon>Methanobacteriaceae</taxon>
        <taxon>Methanobrevibacter</taxon>
    </lineage>
</organism>
<dbReference type="EC" id="6.3.4.13" evidence="2"/>
<dbReference type="EMBL" id="CP000678">
    <property type="protein sequence ID" value="ABQ87432.1"/>
    <property type="molecule type" value="Genomic_DNA"/>
</dbReference>
<dbReference type="RefSeq" id="WP_004032704.1">
    <property type="nucleotide sequence ID" value="NZ_CP117965.1"/>
</dbReference>
<dbReference type="SMR" id="A5UMK4"/>
<dbReference type="STRING" id="420247.Msm_1227"/>
<dbReference type="EnsemblBacteria" id="ABQ87432">
    <property type="protein sequence ID" value="ABQ87432"/>
    <property type="gene ID" value="Msm_1227"/>
</dbReference>
<dbReference type="GeneID" id="78817880"/>
<dbReference type="KEGG" id="msi:Msm_1227"/>
<dbReference type="PATRIC" id="fig|420247.28.peg.1226"/>
<dbReference type="eggNOG" id="arCOG04415">
    <property type="taxonomic scope" value="Archaea"/>
</dbReference>
<dbReference type="HOGENOM" id="CLU_027420_3_0_2"/>
<dbReference type="UniPathway" id="UPA00074">
    <property type="reaction ID" value="UER00125"/>
</dbReference>
<dbReference type="Proteomes" id="UP000001992">
    <property type="component" value="Chromosome"/>
</dbReference>
<dbReference type="GO" id="GO:0005524">
    <property type="term" value="F:ATP binding"/>
    <property type="evidence" value="ECO:0007669"/>
    <property type="project" value="UniProtKB-KW"/>
</dbReference>
<dbReference type="GO" id="GO:0046872">
    <property type="term" value="F:metal ion binding"/>
    <property type="evidence" value="ECO:0007669"/>
    <property type="project" value="UniProtKB-KW"/>
</dbReference>
<dbReference type="GO" id="GO:0004637">
    <property type="term" value="F:phosphoribosylamine-glycine ligase activity"/>
    <property type="evidence" value="ECO:0007669"/>
    <property type="project" value="UniProtKB-UniRule"/>
</dbReference>
<dbReference type="GO" id="GO:0006189">
    <property type="term" value="P:'de novo' IMP biosynthetic process"/>
    <property type="evidence" value="ECO:0007669"/>
    <property type="project" value="UniProtKB-UniRule"/>
</dbReference>
<dbReference type="GO" id="GO:0009113">
    <property type="term" value="P:purine nucleobase biosynthetic process"/>
    <property type="evidence" value="ECO:0007669"/>
    <property type="project" value="InterPro"/>
</dbReference>
<dbReference type="Gene3D" id="3.40.50.20">
    <property type="match status" value="1"/>
</dbReference>
<dbReference type="Gene3D" id="3.30.1490.20">
    <property type="entry name" value="ATP-grasp fold, A domain"/>
    <property type="match status" value="1"/>
</dbReference>
<dbReference type="Gene3D" id="3.30.470.20">
    <property type="entry name" value="ATP-grasp fold, B domain"/>
    <property type="match status" value="1"/>
</dbReference>
<dbReference type="Gene3D" id="3.90.600.10">
    <property type="entry name" value="Phosphoribosylglycinamide synthetase, C-terminal domain"/>
    <property type="match status" value="1"/>
</dbReference>
<dbReference type="HAMAP" id="MF_00138">
    <property type="entry name" value="GARS"/>
    <property type="match status" value="1"/>
</dbReference>
<dbReference type="InterPro" id="IPR011761">
    <property type="entry name" value="ATP-grasp"/>
</dbReference>
<dbReference type="InterPro" id="IPR013815">
    <property type="entry name" value="ATP_grasp_subdomain_1"/>
</dbReference>
<dbReference type="InterPro" id="IPR016185">
    <property type="entry name" value="PreATP-grasp_dom_sf"/>
</dbReference>
<dbReference type="InterPro" id="IPR020561">
    <property type="entry name" value="PRibGlycinamid_synth_ATP-grasp"/>
</dbReference>
<dbReference type="InterPro" id="IPR000115">
    <property type="entry name" value="PRibGlycinamide_synth"/>
</dbReference>
<dbReference type="InterPro" id="IPR020560">
    <property type="entry name" value="PRibGlycinamide_synth_C-dom"/>
</dbReference>
<dbReference type="InterPro" id="IPR037123">
    <property type="entry name" value="PRibGlycinamide_synth_C_sf"/>
</dbReference>
<dbReference type="InterPro" id="IPR020559">
    <property type="entry name" value="PRibGlycinamide_synth_CS"/>
</dbReference>
<dbReference type="InterPro" id="IPR020562">
    <property type="entry name" value="PRibGlycinamide_synth_N"/>
</dbReference>
<dbReference type="InterPro" id="IPR011054">
    <property type="entry name" value="Rudment_hybrid_motif"/>
</dbReference>
<dbReference type="NCBIfam" id="TIGR00877">
    <property type="entry name" value="purD"/>
    <property type="match status" value="1"/>
</dbReference>
<dbReference type="PANTHER" id="PTHR43472">
    <property type="entry name" value="PHOSPHORIBOSYLAMINE--GLYCINE LIGASE"/>
    <property type="match status" value="1"/>
</dbReference>
<dbReference type="PANTHER" id="PTHR43472:SF1">
    <property type="entry name" value="PHOSPHORIBOSYLAMINE--GLYCINE LIGASE, CHLOROPLASTIC"/>
    <property type="match status" value="1"/>
</dbReference>
<dbReference type="Pfam" id="PF01071">
    <property type="entry name" value="GARS_A"/>
    <property type="match status" value="1"/>
</dbReference>
<dbReference type="Pfam" id="PF02843">
    <property type="entry name" value="GARS_C"/>
    <property type="match status" value="1"/>
</dbReference>
<dbReference type="Pfam" id="PF02844">
    <property type="entry name" value="GARS_N"/>
    <property type="match status" value="1"/>
</dbReference>
<dbReference type="SMART" id="SM01209">
    <property type="entry name" value="GARS_A"/>
    <property type="match status" value="1"/>
</dbReference>
<dbReference type="SMART" id="SM01210">
    <property type="entry name" value="GARS_C"/>
    <property type="match status" value="1"/>
</dbReference>
<dbReference type="SUPFAM" id="SSF56059">
    <property type="entry name" value="Glutathione synthetase ATP-binding domain-like"/>
    <property type="match status" value="1"/>
</dbReference>
<dbReference type="SUPFAM" id="SSF52440">
    <property type="entry name" value="PreATP-grasp domain"/>
    <property type="match status" value="1"/>
</dbReference>
<dbReference type="SUPFAM" id="SSF51246">
    <property type="entry name" value="Rudiment single hybrid motif"/>
    <property type="match status" value="1"/>
</dbReference>
<dbReference type="PROSITE" id="PS50975">
    <property type="entry name" value="ATP_GRASP"/>
    <property type="match status" value="1"/>
</dbReference>
<dbReference type="PROSITE" id="PS00184">
    <property type="entry name" value="GARS"/>
    <property type="match status" value="1"/>
</dbReference>